<dbReference type="EMBL" id="AF017452">
    <property type="protein sequence ID" value="AAB70300.1"/>
    <property type="molecule type" value="mRNA"/>
</dbReference>
<dbReference type="SMR" id="P56486"/>
<dbReference type="GlyCosmos" id="P56486">
    <property type="glycosylation" value="2 sites, No reported glycans"/>
</dbReference>
<dbReference type="GO" id="GO:0005886">
    <property type="term" value="C:plasma membrane"/>
    <property type="evidence" value="ECO:0007669"/>
    <property type="project" value="UniProtKB-SubCell"/>
</dbReference>
<dbReference type="GO" id="GO:0004960">
    <property type="term" value="F:thromboxane receptor activity"/>
    <property type="evidence" value="ECO:0007669"/>
    <property type="project" value="InterPro"/>
</dbReference>
<dbReference type="GO" id="GO:0007189">
    <property type="term" value="P:adenylate cyclase-activating G protein-coupled receptor signaling pathway"/>
    <property type="evidence" value="ECO:0007669"/>
    <property type="project" value="TreeGrafter"/>
</dbReference>
<dbReference type="GO" id="GO:0006954">
    <property type="term" value="P:inflammatory response"/>
    <property type="evidence" value="ECO:0007669"/>
    <property type="project" value="TreeGrafter"/>
</dbReference>
<dbReference type="GO" id="GO:0045777">
    <property type="term" value="P:positive regulation of blood pressure"/>
    <property type="evidence" value="ECO:0007669"/>
    <property type="project" value="TreeGrafter"/>
</dbReference>
<dbReference type="GO" id="GO:0007204">
    <property type="term" value="P:positive regulation of cytosolic calcium ion concentration"/>
    <property type="evidence" value="ECO:0007669"/>
    <property type="project" value="TreeGrafter"/>
</dbReference>
<dbReference type="GO" id="GO:0045907">
    <property type="term" value="P:positive regulation of vasoconstriction"/>
    <property type="evidence" value="ECO:0007669"/>
    <property type="project" value="TreeGrafter"/>
</dbReference>
<dbReference type="CDD" id="cd15143">
    <property type="entry name" value="7tmA_TXA2_R"/>
    <property type="match status" value="1"/>
</dbReference>
<dbReference type="FunFam" id="1.20.1070.10:FF:000163">
    <property type="entry name" value="Thromboxane A2 receptor"/>
    <property type="match status" value="1"/>
</dbReference>
<dbReference type="Gene3D" id="1.20.1070.10">
    <property type="entry name" value="Rhodopsin 7-helix transmembrane proteins"/>
    <property type="match status" value="1"/>
</dbReference>
<dbReference type="InterPro" id="IPR000276">
    <property type="entry name" value="GPCR_Rhodpsn"/>
</dbReference>
<dbReference type="InterPro" id="IPR017452">
    <property type="entry name" value="GPCR_Rhodpsn_7TM"/>
</dbReference>
<dbReference type="InterPro" id="IPR008365">
    <property type="entry name" value="Prostanoid_rcpt"/>
</dbReference>
<dbReference type="InterPro" id="IPR001105">
    <property type="entry name" value="Thbox_rcpt"/>
</dbReference>
<dbReference type="PANTHER" id="PTHR11866">
    <property type="entry name" value="G-PROTEIN COUPLED RECEPTOR FAMILY 1 MEMBER"/>
    <property type="match status" value="1"/>
</dbReference>
<dbReference type="PANTHER" id="PTHR11866:SF5">
    <property type="entry name" value="THROMBOXANE A2 RECEPTOR"/>
    <property type="match status" value="1"/>
</dbReference>
<dbReference type="Pfam" id="PF00001">
    <property type="entry name" value="7tm_1"/>
    <property type="match status" value="1"/>
</dbReference>
<dbReference type="PRINTS" id="PR01788">
    <property type="entry name" value="PROSTANOIDR"/>
</dbReference>
<dbReference type="PRINTS" id="PR00429">
    <property type="entry name" value="THROMBOXANER"/>
</dbReference>
<dbReference type="SUPFAM" id="SSF81321">
    <property type="entry name" value="Family A G protein-coupled receptor-like"/>
    <property type="match status" value="1"/>
</dbReference>
<dbReference type="PROSITE" id="PS00237">
    <property type="entry name" value="G_PROTEIN_RECEP_F1_1"/>
    <property type="match status" value="1"/>
</dbReference>
<dbReference type="PROSITE" id="PS50262">
    <property type="entry name" value="G_PROTEIN_RECEP_F1_2"/>
    <property type="match status" value="1"/>
</dbReference>
<evidence type="ECO:0000250" key="1"/>
<evidence type="ECO:0000250" key="2">
    <source>
        <dbReference type="UniProtKB" id="P21731"/>
    </source>
</evidence>
<evidence type="ECO:0000250" key="3">
    <source>
        <dbReference type="UniProtKB" id="P30987"/>
    </source>
</evidence>
<evidence type="ECO:0000255" key="4"/>
<evidence type="ECO:0000255" key="5">
    <source>
        <dbReference type="PROSITE-ProRule" id="PRU00521"/>
    </source>
</evidence>
<name>TA2R_CHLAE</name>
<proteinExistence type="evidence at transcript level"/>
<sequence length="343" mass="37487">MWPNGSSLGPCFRPTNITLEERRLIASPWFAASFCVVGLASNLLALSVLAGARQGGSHTRSSFLTFLCGLVLTDFLGLLVTGAIVVSQHAALFEWHAVDPGCRLCRFMGVVMIFFGLSPLLLGATMASERFLGITRPFSRPVVTSQRRAWATVGLVWAAALALGLLPLLGLGRYTVQYPGSWCFLTLGAESGDVAFGLLFSMLGGLSVGLSFLLNTVSVATLCHVYHGQEAAQQRPRDSEVEMMAQLLGIMLVASVCWLPLLVFIAQTVLRNPPAMSPSGQLSRATEQELLIYLRVATWNQILDPWVYILFRRAVLRRLQPRLSTRPRSLSLQPQLTQRSGLQ</sequence>
<protein>
    <recommendedName>
        <fullName>Thromboxane A2 receptor</fullName>
        <shortName>TXA2-R</shortName>
    </recommendedName>
    <alternativeName>
        <fullName>Prostanoid TP receptor</fullName>
    </alternativeName>
</protein>
<organism>
    <name type="scientific">Chlorocebus aethiops</name>
    <name type="common">Green monkey</name>
    <name type="synonym">Cercopithecus aethiops</name>
    <dbReference type="NCBI Taxonomy" id="9534"/>
    <lineage>
        <taxon>Eukaryota</taxon>
        <taxon>Metazoa</taxon>
        <taxon>Chordata</taxon>
        <taxon>Craniata</taxon>
        <taxon>Vertebrata</taxon>
        <taxon>Euteleostomi</taxon>
        <taxon>Mammalia</taxon>
        <taxon>Eutheria</taxon>
        <taxon>Euarchontoglires</taxon>
        <taxon>Primates</taxon>
        <taxon>Haplorrhini</taxon>
        <taxon>Catarrhini</taxon>
        <taxon>Cercopithecidae</taxon>
        <taxon>Cercopithecinae</taxon>
        <taxon>Chlorocebus</taxon>
    </lineage>
</organism>
<accession>P56486</accession>
<comment type="function">
    <text evidence="1">Receptor for thromboxane A2 (TXA2), a potent stimulator of platelet aggregation. The activity of this receptor is mediated by a G-protein that activates a phosphatidylinositol-calcium second messenger system. In the kidney, the binding of TXA2 to glomerular TP receptors causes intense vasoconstriction. Activates phospholipase C and adenylyl cyclase (By similarity).</text>
</comment>
<comment type="subunit">
    <text evidence="1">Interacts with RPGRIP1L. Interacts with RACK1; the interaction regulates TBXA2R cell surface expression (By similarity).</text>
</comment>
<comment type="subcellular location">
    <subcellularLocation>
        <location>Cell membrane</location>
        <topology>Multi-pass membrane protein</topology>
    </subcellularLocation>
</comment>
<comment type="similarity">
    <text evidence="5">Belongs to the G-protein coupled receptor 1 family.</text>
</comment>
<reference key="1">
    <citation type="journal article" date="1998" name="Biochim. Biophys. Acta">
        <title>Cloning and characterization of an endogenous COS-7 cell thromboxane A2 receptor.</title>
        <authorList>
            <person name="Becker K.P."/>
            <person name="Ullian M."/>
            <person name="Halushka P.V."/>
        </authorList>
    </citation>
    <scope>NUCLEOTIDE SEQUENCE [MRNA]</scope>
</reference>
<feature type="chain" id="PRO_0000070137" description="Thromboxane A2 receptor">
    <location>
        <begin position="1"/>
        <end position="343"/>
    </location>
</feature>
<feature type="topological domain" description="Extracellular" evidence="4">
    <location>
        <begin position="1"/>
        <end position="29"/>
    </location>
</feature>
<feature type="transmembrane region" description="Helical; Name=1" evidence="4">
    <location>
        <begin position="30"/>
        <end position="52"/>
    </location>
</feature>
<feature type="topological domain" description="Cytoplasmic" evidence="4">
    <location>
        <begin position="53"/>
        <end position="66"/>
    </location>
</feature>
<feature type="transmembrane region" description="Helical; Name=2" evidence="4">
    <location>
        <begin position="67"/>
        <end position="87"/>
    </location>
</feature>
<feature type="topological domain" description="Extracellular" evidence="4">
    <location>
        <begin position="88"/>
        <end position="106"/>
    </location>
</feature>
<feature type="transmembrane region" description="Helical; Name=3" evidence="4">
    <location>
        <begin position="107"/>
        <end position="128"/>
    </location>
</feature>
<feature type="topological domain" description="Cytoplasmic" evidence="4">
    <location>
        <begin position="129"/>
        <end position="149"/>
    </location>
</feature>
<feature type="transmembrane region" description="Helical; Name=4" evidence="4">
    <location>
        <begin position="150"/>
        <end position="172"/>
    </location>
</feature>
<feature type="topological domain" description="Extracellular" evidence="4">
    <location>
        <begin position="173"/>
        <end position="193"/>
    </location>
</feature>
<feature type="transmembrane region" description="Helical; Name=5" evidence="4">
    <location>
        <begin position="194"/>
        <end position="219"/>
    </location>
</feature>
<feature type="topological domain" description="Cytoplasmic" evidence="4">
    <location>
        <begin position="220"/>
        <end position="246"/>
    </location>
</feature>
<feature type="transmembrane region" description="Helical; Name=6" evidence="4">
    <location>
        <begin position="247"/>
        <end position="270"/>
    </location>
</feature>
<feature type="topological domain" description="Extracellular" evidence="4">
    <location>
        <begin position="271"/>
        <end position="289"/>
    </location>
</feature>
<feature type="transmembrane region" description="Helical; Name=7" evidence="4">
    <location>
        <begin position="290"/>
        <end position="311"/>
    </location>
</feature>
<feature type="topological domain" description="Cytoplasmic" evidence="4">
    <location>
        <begin position="312"/>
        <end position="343"/>
    </location>
</feature>
<feature type="modified residue" description="Phosphoserine" evidence="2">
    <location>
        <position position="329"/>
    </location>
</feature>
<feature type="modified residue" description="Phosphoserine" evidence="3">
    <location>
        <position position="331"/>
    </location>
</feature>
<feature type="glycosylation site" description="N-linked (GlcNAc...) asparagine" evidence="4">
    <location>
        <position position="4"/>
    </location>
</feature>
<feature type="glycosylation site" description="N-linked (GlcNAc...) asparagine" evidence="4">
    <location>
        <position position="16"/>
    </location>
</feature>
<feature type="disulfide bond" evidence="5">
    <location>
        <begin position="105"/>
        <end position="183"/>
    </location>
</feature>
<gene>
    <name type="primary">TBXA2R</name>
</gene>
<keyword id="KW-1003">Cell membrane</keyword>
<keyword id="KW-1015">Disulfide bond</keyword>
<keyword id="KW-0297">G-protein coupled receptor</keyword>
<keyword id="KW-0325">Glycoprotein</keyword>
<keyword id="KW-0472">Membrane</keyword>
<keyword id="KW-0597">Phosphoprotein</keyword>
<keyword id="KW-0675">Receptor</keyword>
<keyword id="KW-0807">Transducer</keyword>
<keyword id="KW-0812">Transmembrane</keyword>
<keyword id="KW-1133">Transmembrane helix</keyword>